<sequence length="337" mass="37531">MSKINLLLLCGGGSAEHDISLMSANYFETSLAKSEQFSVLRVELDKFGQYRTAAGDDCELTNSREIRFRDESKTPWPVDYVIPCIHGYPGETGDIQSYFNLIQLPYFGCESEASSNCFNKITAKMWFSALGIPNTPYIFLNQFDDAAIEQTQAALAQWGSIFVKAASQGSSVGCYKVDDSDKVAGVLKDAFGYAPYVIVEKTIKARELEVAVYEYNGEVVATVPGEIICDTNTFYTFDEKYAKNSKARTDVVAQHVSAEISEQIRAYAIKAFKGMKLRHLSRIDFFLTADNEILLNEINTFPGSTPISMFPKMLQNHGHDFTEYLSLVINGQLTAKS</sequence>
<feature type="chain" id="PRO_1000074785" description="D-alanine--D-alanine ligase">
    <location>
        <begin position="1"/>
        <end position="337"/>
    </location>
</feature>
<feature type="domain" description="ATP-grasp" evidence="2">
    <location>
        <begin position="124"/>
        <end position="330"/>
    </location>
</feature>
<feature type="binding site" evidence="2">
    <location>
        <begin position="154"/>
        <end position="209"/>
    </location>
    <ligand>
        <name>ATP</name>
        <dbReference type="ChEBI" id="CHEBI:30616"/>
    </ligand>
</feature>
<feature type="binding site" evidence="2">
    <location>
        <position position="284"/>
    </location>
    <ligand>
        <name>Mg(2+)</name>
        <dbReference type="ChEBI" id="CHEBI:18420"/>
        <label>1</label>
    </ligand>
</feature>
<feature type="binding site" evidence="2">
    <location>
        <position position="297"/>
    </location>
    <ligand>
        <name>Mg(2+)</name>
        <dbReference type="ChEBI" id="CHEBI:18420"/>
        <label>1</label>
    </ligand>
</feature>
<feature type="binding site" evidence="2">
    <location>
        <position position="297"/>
    </location>
    <ligand>
        <name>Mg(2+)</name>
        <dbReference type="ChEBI" id="CHEBI:18420"/>
        <label>2</label>
    </ligand>
</feature>
<feature type="binding site" evidence="2">
    <location>
        <position position="299"/>
    </location>
    <ligand>
        <name>Mg(2+)</name>
        <dbReference type="ChEBI" id="CHEBI:18420"/>
        <label>2</label>
    </ligand>
</feature>
<proteinExistence type="inferred from homology"/>
<comment type="function">
    <text evidence="2">Cell wall formation.</text>
</comment>
<comment type="catalytic activity">
    <reaction evidence="2">
        <text>2 D-alanine + ATP = D-alanyl-D-alanine + ADP + phosphate + H(+)</text>
        <dbReference type="Rhea" id="RHEA:11224"/>
        <dbReference type="ChEBI" id="CHEBI:15378"/>
        <dbReference type="ChEBI" id="CHEBI:30616"/>
        <dbReference type="ChEBI" id="CHEBI:43474"/>
        <dbReference type="ChEBI" id="CHEBI:57416"/>
        <dbReference type="ChEBI" id="CHEBI:57822"/>
        <dbReference type="ChEBI" id="CHEBI:456216"/>
        <dbReference type="EC" id="6.3.2.4"/>
    </reaction>
</comment>
<comment type="cofactor">
    <cofactor evidence="1">
        <name>Mg(2+)</name>
        <dbReference type="ChEBI" id="CHEBI:18420"/>
    </cofactor>
    <cofactor evidence="1">
        <name>Mn(2+)</name>
        <dbReference type="ChEBI" id="CHEBI:29035"/>
    </cofactor>
    <text evidence="1">Binds 2 magnesium or manganese ions per subunit.</text>
</comment>
<comment type="pathway">
    <text evidence="2">Cell wall biogenesis; peptidoglycan biosynthesis.</text>
</comment>
<comment type="subcellular location">
    <subcellularLocation>
        <location evidence="2">Cytoplasm</location>
    </subcellularLocation>
</comment>
<comment type="similarity">
    <text evidence="2">Belongs to the D-alanine--D-alanine ligase family.</text>
</comment>
<dbReference type="EC" id="6.3.2.4" evidence="2"/>
<dbReference type="EMBL" id="CP000891">
    <property type="protein sequence ID" value="ABX49259.1"/>
    <property type="molecule type" value="Genomic_DNA"/>
</dbReference>
<dbReference type="RefSeq" id="WP_006087302.1">
    <property type="nucleotide sequence ID" value="NC_009997.1"/>
</dbReference>
<dbReference type="SMR" id="A9L0H9"/>
<dbReference type="KEGG" id="sbn:Sbal195_2090"/>
<dbReference type="HOGENOM" id="CLU_039268_0_0_6"/>
<dbReference type="UniPathway" id="UPA00219"/>
<dbReference type="Proteomes" id="UP000000770">
    <property type="component" value="Chromosome"/>
</dbReference>
<dbReference type="GO" id="GO:0005829">
    <property type="term" value="C:cytosol"/>
    <property type="evidence" value="ECO:0007669"/>
    <property type="project" value="TreeGrafter"/>
</dbReference>
<dbReference type="GO" id="GO:0005524">
    <property type="term" value="F:ATP binding"/>
    <property type="evidence" value="ECO:0007669"/>
    <property type="project" value="UniProtKB-KW"/>
</dbReference>
<dbReference type="GO" id="GO:0008716">
    <property type="term" value="F:D-alanine-D-alanine ligase activity"/>
    <property type="evidence" value="ECO:0007669"/>
    <property type="project" value="UniProtKB-UniRule"/>
</dbReference>
<dbReference type="GO" id="GO:0046872">
    <property type="term" value="F:metal ion binding"/>
    <property type="evidence" value="ECO:0007669"/>
    <property type="project" value="UniProtKB-KW"/>
</dbReference>
<dbReference type="GO" id="GO:0071555">
    <property type="term" value="P:cell wall organization"/>
    <property type="evidence" value="ECO:0007669"/>
    <property type="project" value="UniProtKB-KW"/>
</dbReference>
<dbReference type="GO" id="GO:0009252">
    <property type="term" value="P:peptidoglycan biosynthetic process"/>
    <property type="evidence" value="ECO:0007669"/>
    <property type="project" value="UniProtKB-UniRule"/>
</dbReference>
<dbReference type="GO" id="GO:0008360">
    <property type="term" value="P:regulation of cell shape"/>
    <property type="evidence" value="ECO:0007669"/>
    <property type="project" value="UniProtKB-KW"/>
</dbReference>
<dbReference type="FunFam" id="3.40.50.20:FF:000034">
    <property type="entry name" value="D-alanine--D-alanine ligase"/>
    <property type="match status" value="1"/>
</dbReference>
<dbReference type="Gene3D" id="3.40.50.20">
    <property type="match status" value="1"/>
</dbReference>
<dbReference type="Gene3D" id="3.30.1490.20">
    <property type="entry name" value="ATP-grasp fold, A domain"/>
    <property type="match status" value="1"/>
</dbReference>
<dbReference type="Gene3D" id="3.30.470.20">
    <property type="entry name" value="ATP-grasp fold, B domain"/>
    <property type="match status" value="1"/>
</dbReference>
<dbReference type="HAMAP" id="MF_00047">
    <property type="entry name" value="Dala_Dala_lig"/>
    <property type="match status" value="1"/>
</dbReference>
<dbReference type="InterPro" id="IPR011761">
    <property type="entry name" value="ATP-grasp"/>
</dbReference>
<dbReference type="InterPro" id="IPR013815">
    <property type="entry name" value="ATP_grasp_subdomain_1"/>
</dbReference>
<dbReference type="InterPro" id="IPR000291">
    <property type="entry name" value="D-Ala_lig_Van_CS"/>
</dbReference>
<dbReference type="InterPro" id="IPR005905">
    <property type="entry name" value="D_ala_D_ala"/>
</dbReference>
<dbReference type="InterPro" id="IPR011095">
    <property type="entry name" value="Dala_Dala_lig_C"/>
</dbReference>
<dbReference type="InterPro" id="IPR011127">
    <property type="entry name" value="Dala_Dala_lig_N"/>
</dbReference>
<dbReference type="InterPro" id="IPR016185">
    <property type="entry name" value="PreATP-grasp_dom_sf"/>
</dbReference>
<dbReference type="NCBIfam" id="TIGR01205">
    <property type="entry name" value="D_ala_D_alaTIGR"/>
    <property type="match status" value="1"/>
</dbReference>
<dbReference type="NCBIfam" id="NF002527">
    <property type="entry name" value="PRK01966.1-3"/>
    <property type="match status" value="1"/>
</dbReference>
<dbReference type="NCBIfam" id="NF002528">
    <property type="entry name" value="PRK01966.1-4"/>
    <property type="match status" value="1"/>
</dbReference>
<dbReference type="PANTHER" id="PTHR23132">
    <property type="entry name" value="D-ALANINE--D-ALANINE LIGASE"/>
    <property type="match status" value="1"/>
</dbReference>
<dbReference type="PANTHER" id="PTHR23132:SF25">
    <property type="entry name" value="D-ALANINE--D-ALANINE LIGASE A"/>
    <property type="match status" value="1"/>
</dbReference>
<dbReference type="Pfam" id="PF07478">
    <property type="entry name" value="Dala_Dala_lig_C"/>
    <property type="match status" value="1"/>
</dbReference>
<dbReference type="Pfam" id="PF01820">
    <property type="entry name" value="Dala_Dala_lig_N"/>
    <property type="match status" value="1"/>
</dbReference>
<dbReference type="PIRSF" id="PIRSF039102">
    <property type="entry name" value="Ddl/VanB"/>
    <property type="match status" value="1"/>
</dbReference>
<dbReference type="SUPFAM" id="SSF56059">
    <property type="entry name" value="Glutathione synthetase ATP-binding domain-like"/>
    <property type="match status" value="1"/>
</dbReference>
<dbReference type="SUPFAM" id="SSF52440">
    <property type="entry name" value="PreATP-grasp domain"/>
    <property type="match status" value="1"/>
</dbReference>
<dbReference type="PROSITE" id="PS50975">
    <property type="entry name" value="ATP_GRASP"/>
    <property type="match status" value="1"/>
</dbReference>
<dbReference type="PROSITE" id="PS00843">
    <property type="entry name" value="DALA_DALA_LIGASE_1"/>
    <property type="match status" value="1"/>
</dbReference>
<dbReference type="PROSITE" id="PS00844">
    <property type="entry name" value="DALA_DALA_LIGASE_2"/>
    <property type="match status" value="1"/>
</dbReference>
<keyword id="KW-0067">ATP-binding</keyword>
<keyword id="KW-0133">Cell shape</keyword>
<keyword id="KW-0961">Cell wall biogenesis/degradation</keyword>
<keyword id="KW-0963">Cytoplasm</keyword>
<keyword id="KW-0436">Ligase</keyword>
<keyword id="KW-0460">Magnesium</keyword>
<keyword id="KW-0464">Manganese</keyword>
<keyword id="KW-0479">Metal-binding</keyword>
<keyword id="KW-0547">Nucleotide-binding</keyword>
<keyword id="KW-0573">Peptidoglycan synthesis</keyword>
<name>DDL_SHEB9</name>
<organism>
    <name type="scientific">Shewanella baltica (strain OS195)</name>
    <dbReference type="NCBI Taxonomy" id="399599"/>
    <lineage>
        <taxon>Bacteria</taxon>
        <taxon>Pseudomonadati</taxon>
        <taxon>Pseudomonadota</taxon>
        <taxon>Gammaproteobacteria</taxon>
        <taxon>Alteromonadales</taxon>
        <taxon>Shewanellaceae</taxon>
        <taxon>Shewanella</taxon>
    </lineage>
</organism>
<accession>A9L0H9</accession>
<evidence type="ECO:0000250" key="1"/>
<evidence type="ECO:0000255" key="2">
    <source>
        <dbReference type="HAMAP-Rule" id="MF_00047"/>
    </source>
</evidence>
<reference key="1">
    <citation type="submission" date="2007-11" db="EMBL/GenBank/DDBJ databases">
        <title>Complete sequence of chromosome of Shewanella baltica OS195.</title>
        <authorList>
            <consortium name="US DOE Joint Genome Institute"/>
            <person name="Copeland A."/>
            <person name="Lucas S."/>
            <person name="Lapidus A."/>
            <person name="Barry K."/>
            <person name="Glavina del Rio T."/>
            <person name="Dalin E."/>
            <person name="Tice H."/>
            <person name="Pitluck S."/>
            <person name="Chain P."/>
            <person name="Malfatti S."/>
            <person name="Shin M."/>
            <person name="Vergez L."/>
            <person name="Schmutz J."/>
            <person name="Larimer F."/>
            <person name="Land M."/>
            <person name="Hauser L."/>
            <person name="Kyrpides N."/>
            <person name="Kim E."/>
            <person name="Brettar I."/>
            <person name="Rodrigues J."/>
            <person name="Konstantinidis K."/>
            <person name="Klappenbach J."/>
            <person name="Hofle M."/>
            <person name="Tiedje J."/>
            <person name="Richardson P."/>
        </authorList>
    </citation>
    <scope>NUCLEOTIDE SEQUENCE [LARGE SCALE GENOMIC DNA]</scope>
    <source>
        <strain>OS195</strain>
    </source>
</reference>
<gene>
    <name evidence="2" type="primary">ddl</name>
    <name type="ordered locus">Sbal195_2090</name>
</gene>
<protein>
    <recommendedName>
        <fullName evidence="2">D-alanine--D-alanine ligase</fullName>
        <ecNumber evidence="2">6.3.2.4</ecNumber>
    </recommendedName>
    <alternativeName>
        <fullName evidence="2">D-Ala-D-Ala ligase</fullName>
    </alternativeName>
    <alternativeName>
        <fullName evidence="2">D-alanylalanine synthetase</fullName>
    </alternativeName>
</protein>